<proteinExistence type="evidence at transcript level"/>
<sequence length="362" mass="40205">MRVTAPRTLLLLLSAALALTETWAGSHSMRYFDTAVSRPGRGEPRFITVGYVDDTQFVRFDSDAASPRMEPRAPWIEQEGPEYWDRETQTSKAQAQTDRENLRIALRYYNQSEAGSHTFQRMFGCDVGPDGRLLRGYSQSAYDGKDYIALNEDLSSWTAADTAAQITQRKWEAAREAEQLRAYLEGTCVEWLRRYLENGRETLQRADTPKTHVTHHPISDHEATLRCWALGFYPAEITLTWQRDGEDQTQDTELVETRPAGDGTFQKWAAVVVPSGEEERYTCHVQHEGLPKPLTLRWEPSSQSTIPIVGIVAGLAVLAVVVIGAVVTAVICRRKSSGGKGGSYSQAASSDSAQGSDVSLTA</sequence>
<keyword id="KW-1015">Disulfide bond</keyword>
<keyword id="KW-0325">Glycoprotein</keyword>
<keyword id="KW-0391">Immunity</keyword>
<keyword id="KW-0472">Membrane</keyword>
<keyword id="KW-0490">MHC I</keyword>
<keyword id="KW-1185">Reference proteome</keyword>
<keyword id="KW-0732">Signal</keyword>
<keyword id="KW-0812">Transmembrane</keyword>
<keyword id="KW-1133">Transmembrane helix</keyword>
<accession>P30380</accession>
<comment type="function">
    <text>Involved in the presentation of foreign antigens to the immune system.</text>
</comment>
<comment type="subunit">
    <text>Heterodimer of an alpha chain and a beta chain (beta-2-microglobulin).</text>
</comment>
<comment type="subcellular location">
    <subcellularLocation>
        <location>Membrane</location>
        <topology>Single-pass type I membrane protein</topology>
    </subcellularLocation>
</comment>
<comment type="similarity">
    <text evidence="5">Belongs to the MHC class I family.</text>
</comment>
<protein>
    <recommendedName>
        <fullName>Class I histocompatibility antigen, Gogo-B*0102 alpha chain</fullName>
    </recommendedName>
</protein>
<organism>
    <name type="scientific">Gorilla gorilla gorilla</name>
    <name type="common">Western lowland gorilla</name>
    <dbReference type="NCBI Taxonomy" id="9595"/>
    <lineage>
        <taxon>Eukaryota</taxon>
        <taxon>Metazoa</taxon>
        <taxon>Chordata</taxon>
        <taxon>Craniata</taxon>
        <taxon>Vertebrata</taxon>
        <taxon>Euteleostomi</taxon>
        <taxon>Mammalia</taxon>
        <taxon>Eutheria</taxon>
        <taxon>Euarchontoglires</taxon>
        <taxon>Primates</taxon>
        <taxon>Haplorrhini</taxon>
        <taxon>Catarrhini</taxon>
        <taxon>Hominidae</taxon>
        <taxon>Gorilla</taxon>
    </lineage>
</organism>
<name>1B02_GORGO</name>
<evidence type="ECO:0000250" key="1"/>
<evidence type="ECO:0000255" key="2"/>
<evidence type="ECO:0000255" key="3">
    <source>
        <dbReference type="PROSITE-ProRule" id="PRU00114"/>
    </source>
</evidence>
<evidence type="ECO:0000256" key="4">
    <source>
        <dbReference type="SAM" id="MobiDB-lite"/>
    </source>
</evidence>
<evidence type="ECO:0000305" key="5"/>
<reference key="1">
    <citation type="journal article" date="1991" name="J. Exp. Med.">
        <title>Gorilla class I major histocompatibility complex alleles: comparison to human and chimpanzee class I.</title>
        <authorList>
            <person name="Lawlor D.A."/>
            <person name="Warren E."/>
            <person name="Taylor P."/>
            <person name="Parham P."/>
        </authorList>
    </citation>
    <scope>NUCLEOTIDE SEQUENCE [MRNA]</scope>
</reference>
<feature type="signal peptide" evidence="1">
    <location>
        <begin position="1"/>
        <end position="24"/>
    </location>
</feature>
<feature type="chain" id="PRO_0000018902" description="Class I histocompatibility antigen, Gogo-B*0102 alpha chain">
    <location>
        <begin position="25"/>
        <end position="362"/>
    </location>
</feature>
<feature type="topological domain" description="Extracellular" evidence="2">
    <location>
        <begin position="25"/>
        <end position="308"/>
    </location>
</feature>
<feature type="transmembrane region" description="Helical" evidence="2">
    <location>
        <begin position="309"/>
        <end position="332"/>
    </location>
</feature>
<feature type="topological domain" description="Cytoplasmic" evidence="2">
    <location>
        <begin position="333"/>
        <end position="362"/>
    </location>
</feature>
<feature type="domain" description="Ig-like C1-type">
    <location>
        <begin position="209"/>
        <end position="295"/>
    </location>
</feature>
<feature type="region of interest" description="Alpha-1">
    <location>
        <begin position="25"/>
        <end position="114"/>
    </location>
</feature>
<feature type="region of interest" description="Alpha-2">
    <location>
        <begin position="115"/>
        <end position="206"/>
    </location>
</feature>
<feature type="region of interest" description="Alpha-3">
    <location>
        <begin position="207"/>
        <end position="298"/>
    </location>
</feature>
<feature type="region of interest" description="Connecting peptide">
    <location>
        <begin position="299"/>
        <end position="308"/>
    </location>
</feature>
<feature type="region of interest" description="Disordered" evidence="4">
    <location>
        <begin position="335"/>
        <end position="362"/>
    </location>
</feature>
<feature type="compositionally biased region" description="Low complexity" evidence="4">
    <location>
        <begin position="343"/>
        <end position="362"/>
    </location>
</feature>
<feature type="glycosylation site" description="N-linked (GlcNAc...) asparagine" evidence="1">
    <location>
        <position position="110"/>
    </location>
</feature>
<feature type="disulfide bond" evidence="3">
    <location>
        <begin position="125"/>
        <end position="188"/>
    </location>
</feature>
<feature type="disulfide bond" evidence="3">
    <location>
        <begin position="227"/>
        <end position="283"/>
    </location>
</feature>
<dbReference type="EMBL" id="X60693">
    <property type="protein sequence ID" value="CAA43101.1"/>
    <property type="molecule type" value="mRNA"/>
</dbReference>
<dbReference type="PIR" id="JH0540">
    <property type="entry name" value="JH0540"/>
</dbReference>
<dbReference type="SMR" id="P30380"/>
<dbReference type="FunCoup" id="P30380">
    <property type="interactions" value="802"/>
</dbReference>
<dbReference type="InParanoid" id="P30380"/>
<dbReference type="Proteomes" id="UP000001519">
    <property type="component" value="Unplaced"/>
</dbReference>
<dbReference type="GO" id="GO:0031901">
    <property type="term" value="C:early endosome membrane"/>
    <property type="evidence" value="ECO:0007669"/>
    <property type="project" value="UniProtKB-ARBA"/>
</dbReference>
<dbReference type="GO" id="GO:0012507">
    <property type="term" value="C:ER to Golgi transport vesicle membrane"/>
    <property type="evidence" value="ECO:0007669"/>
    <property type="project" value="UniProtKB-ARBA"/>
</dbReference>
<dbReference type="GO" id="GO:0009897">
    <property type="term" value="C:external side of plasma membrane"/>
    <property type="evidence" value="ECO:0000318"/>
    <property type="project" value="GO_Central"/>
</dbReference>
<dbReference type="GO" id="GO:0005615">
    <property type="term" value="C:extracellular space"/>
    <property type="evidence" value="ECO:0000318"/>
    <property type="project" value="GO_Central"/>
</dbReference>
<dbReference type="GO" id="GO:0098553">
    <property type="term" value="C:lumenal side of endoplasmic reticulum membrane"/>
    <property type="evidence" value="ECO:0007669"/>
    <property type="project" value="UniProtKB-ARBA"/>
</dbReference>
<dbReference type="GO" id="GO:0042612">
    <property type="term" value="C:MHC class I protein complex"/>
    <property type="evidence" value="ECO:0007669"/>
    <property type="project" value="UniProtKB-KW"/>
</dbReference>
<dbReference type="GO" id="GO:0030670">
    <property type="term" value="C:phagocytic vesicle membrane"/>
    <property type="evidence" value="ECO:0007669"/>
    <property type="project" value="UniProtKB-ARBA"/>
</dbReference>
<dbReference type="GO" id="GO:0055038">
    <property type="term" value="C:recycling endosome membrane"/>
    <property type="evidence" value="ECO:0007669"/>
    <property type="project" value="UniProtKB-ARBA"/>
</dbReference>
<dbReference type="GO" id="GO:0042605">
    <property type="term" value="F:peptide antigen binding"/>
    <property type="evidence" value="ECO:0000318"/>
    <property type="project" value="GO_Central"/>
</dbReference>
<dbReference type="GO" id="GO:0005102">
    <property type="term" value="F:signaling receptor binding"/>
    <property type="evidence" value="ECO:0000318"/>
    <property type="project" value="GO_Central"/>
</dbReference>
<dbReference type="GO" id="GO:0002486">
    <property type="term" value="P:antigen processing and presentation of endogenous peptide antigen via MHC class I via ER pathway, TAP-independent"/>
    <property type="evidence" value="ECO:0000318"/>
    <property type="project" value="GO_Central"/>
</dbReference>
<dbReference type="GO" id="GO:0002476">
    <property type="term" value="P:antigen processing and presentation of endogenous peptide antigen via MHC class Ib"/>
    <property type="evidence" value="ECO:0000318"/>
    <property type="project" value="GO_Central"/>
</dbReference>
<dbReference type="GO" id="GO:0006955">
    <property type="term" value="P:immune response"/>
    <property type="evidence" value="ECO:0000318"/>
    <property type="project" value="GO_Central"/>
</dbReference>
<dbReference type="GO" id="GO:0001916">
    <property type="term" value="P:positive regulation of T cell mediated cytotoxicity"/>
    <property type="evidence" value="ECO:0000318"/>
    <property type="project" value="GO_Central"/>
</dbReference>
<dbReference type="CDD" id="cd21026">
    <property type="entry name" value="IgC1_MHC_Ia_HLA-B"/>
    <property type="match status" value="1"/>
</dbReference>
<dbReference type="FunFam" id="2.60.40.10:FF:000014">
    <property type="entry name" value="H-2 class I histocompatibility antigen, alpha chain"/>
    <property type="match status" value="1"/>
</dbReference>
<dbReference type="FunFam" id="3.30.500.10:FF:000001">
    <property type="entry name" value="H-2 class I histocompatibility antigen, alpha chain"/>
    <property type="match status" value="1"/>
</dbReference>
<dbReference type="Gene3D" id="2.60.40.10">
    <property type="entry name" value="Immunoglobulins"/>
    <property type="match status" value="1"/>
</dbReference>
<dbReference type="Gene3D" id="3.30.500.10">
    <property type="entry name" value="MHC class I-like antigen recognition-like"/>
    <property type="match status" value="1"/>
</dbReference>
<dbReference type="InterPro" id="IPR007110">
    <property type="entry name" value="Ig-like_dom"/>
</dbReference>
<dbReference type="InterPro" id="IPR036179">
    <property type="entry name" value="Ig-like_dom_sf"/>
</dbReference>
<dbReference type="InterPro" id="IPR013783">
    <property type="entry name" value="Ig-like_fold"/>
</dbReference>
<dbReference type="InterPro" id="IPR003006">
    <property type="entry name" value="Ig/MHC_CS"/>
</dbReference>
<dbReference type="InterPro" id="IPR003597">
    <property type="entry name" value="Ig_C1-set"/>
</dbReference>
<dbReference type="InterPro" id="IPR050208">
    <property type="entry name" value="MHC_class-I_related"/>
</dbReference>
<dbReference type="InterPro" id="IPR011161">
    <property type="entry name" value="MHC_I-like_Ag-recog"/>
</dbReference>
<dbReference type="InterPro" id="IPR037055">
    <property type="entry name" value="MHC_I-like_Ag-recog_sf"/>
</dbReference>
<dbReference type="InterPro" id="IPR011162">
    <property type="entry name" value="MHC_I/II-like_Ag-recog"/>
</dbReference>
<dbReference type="InterPro" id="IPR001039">
    <property type="entry name" value="MHC_I_a_a1/a2"/>
</dbReference>
<dbReference type="InterPro" id="IPR010579">
    <property type="entry name" value="MHC_I_a_C"/>
</dbReference>
<dbReference type="PANTHER" id="PTHR16675:SF279">
    <property type="entry name" value="CLASS I HISTOCOMPATIBILITY ANTIGEN, GOGO-B*0102 ALPHA CHAIN"/>
    <property type="match status" value="1"/>
</dbReference>
<dbReference type="PANTHER" id="PTHR16675">
    <property type="entry name" value="MHC CLASS I-RELATED"/>
    <property type="match status" value="1"/>
</dbReference>
<dbReference type="Pfam" id="PF07654">
    <property type="entry name" value="C1-set"/>
    <property type="match status" value="1"/>
</dbReference>
<dbReference type="Pfam" id="PF00129">
    <property type="entry name" value="MHC_I"/>
    <property type="match status" value="1"/>
</dbReference>
<dbReference type="Pfam" id="PF06623">
    <property type="entry name" value="MHC_I_C"/>
    <property type="match status" value="1"/>
</dbReference>
<dbReference type="PRINTS" id="PR01638">
    <property type="entry name" value="MHCCLASSI"/>
</dbReference>
<dbReference type="SMART" id="SM00407">
    <property type="entry name" value="IGc1"/>
    <property type="match status" value="1"/>
</dbReference>
<dbReference type="SUPFAM" id="SSF48726">
    <property type="entry name" value="Immunoglobulin"/>
    <property type="match status" value="1"/>
</dbReference>
<dbReference type="SUPFAM" id="SSF54452">
    <property type="entry name" value="MHC antigen-recognition domain"/>
    <property type="match status" value="1"/>
</dbReference>
<dbReference type="PROSITE" id="PS50835">
    <property type="entry name" value="IG_LIKE"/>
    <property type="match status" value="1"/>
</dbReference>
<dbReference type="PROSITE" id="PS00290">
    <property type="entry name" value="IG_MHC"/>
    <property type="match status" value="1"/>
</dbReference>